<feature type="chain" id="PRO_0000157236" description="Protein-export membrane protein SecG">
    <location>
        <begin position="1"/>
        <end position="115"/>
    </location>
</feature>
<feature type="transmembrane region" description="Helical" evidence="2">
    <location>
        <begin position="2"/>
        <end position="22"/>
    </location>
</feature>
<feature type="transmembrane region" description="Helical" evidence="2">
    <location>
        <begin position="51"/>
        <end position="71"/>
    </location>
</feature>
<evidence type="ECO:0000250" key="1"/>
<evidence type="ECO:0000255" key="2"/>
<evidence type="ECO:0000305" key="3"/>
<name>SECG_PASMU</name>
<proteinExistence type="inferred from homology"/>
<protein>
    <recommendedName>
        <fullName>Protein-export membrane protein SecG</fullName>
    </recommendedName>
</protein>
<accession>Q9CP52</accession>
<organism>
    <name type="scientific">Pasteurella multocida (strain Pm70)</name>
    <dbReference type="NCBI Taxonomy" id="272843"/>
    <lineage>
        <taxon>Bacteria</taxon>
        <taxon>Pseudomonadati</taxon>
        <taxon>Pseudomonadota</taxon>
        <taxon>Gammaproteobacteria</taxon>
        <taxon>Pasteurellales</taxon>
        <taxon>Pasteurellaceae</taxon>
        <taxon>Pasteurella</taxon>
    </lineage>
</organism>
<dbReference type="EMBL" id="AE004439">
    <property type="protein sequence ID" value="AAK02292.1"/>
    <property type="molecule type" value="Genomic_DNA"/>
</dbReference>
<dbReference type="RefSeq" id="WP_010906527.1">
    <property type="nucleotide sequence ID" value="NC_002663.1"/>
</dbReference>
<dbReference type="SMR" id="Q9CP52"/>
<dbReference type="STRING" id="272843.PM0208"/>
<dbReference type="EnsemblBacteria" id="AAK02292">
    <property type="protein sequence ID" value="AAK02292"/>
    <property type="gene ID" value="PM0208"/>
</dbReference>
<dbReference type="KEGG" id="pmu:PM0208"/>
<dbReference type="HOGENOM" id="CLU_094156_2_2_6"/>
<dbReference type="OrthoDB" id="9813947at2"/>
<dbReference type="Proteomes" id="UP000000809">
    <property type="component" value="Chromosome"/>
</dbReference>
<dbReference type="GO" id="GO:0005886">
    <property type="term" value="C:plasma membrane"/>
    <property type="evidence" value="ECO:0007669"/>
    <property type="project" value="UniProtKB-SubCell"/>
</dbReference>
<dbReference type="GO" id="GO:0015450">
    <property type="term" value="F:protein-transporting ATPase activity"/>
    <property type="evidence" value="ECO:0007669"/>
    <property type="project" value="InterPro"/>
</dbReference>
<dbReference type="GO" id="GO:0065002">
    <property type="term" value="P:intracellular protein transmembrane transport"/>
    <property type="evidence" value="ECO:0007669"/>
    <property type="project" value="TreeGrafter"/>
</dbReference>
<dbReference type="GO" id="GO:0009306">
    <property type="term" value="P:protein secretion"/>
    <property type="evidence" value="ECO:0007669"/>
    <property type="project" value="InterPro"/>
</dbReference>
<dbReference type="GO" id="GO:0043952">
    <property type="term" value="P:protein transport by the Sec complex"/>
    <property type="evidence" value="ECO:0007669"/>
    <property type="project" value="TreeGrafter"/>
</dbReference>
<dbReference type="InterPro" id="IPR004692">
    <property type="entry name" value="SecG"/>
</dbReference>
<dbReference type="NCBIfam" id="TIGR00810">
    <property type="entry name" value="secG"/>
    <property type="match status" value="1"/>
</dbReference>
<dbReference type="PANTHER" id="PTHR34182">
    <property type="entry name" value="PROTEIN-EXPORT MEMBRANE PROTEIN SECG"/>
    <property type="match status" value="1"/>
</dbReference>
<dbReference type="PANTHER" id="PTHR34182:SF1">
    <property type="entry name" value="PROTEIN-EXPORT MEMBRANE PROTEIN SECG"/>
    <property type="match status" value="1"/>
</dbReference>
<dbReference type="Pfam" id="PF03840">
    <property type="entry name" value="SecG"/>
    <property type="match status" value="1"/>
</dbReference>
<dbReference type="PRINTS" id="PR01651">
    <property type="entry name" value="SECGEXPORT"/>
</dbReference>
<sequence>MYQTLLLGYAIIAIVIVFLILIQQGKGADAGASFGGGASGTIFGSVGSGNFLSKMTALLATAFFVMSIVIGNVNSHRNNVKQGKFDDLSATAEQIQQQQKIDAPAVETKNSDIPQ</sequence>
<reference key="1">
    <citation type="journal article" date="2001" name="Proc. Natl. Acad. Sci. U.S.A.">
        <title>Complete genomic sequence of Pasteurella multocida Pm70.</title>
        <authorList>
            <person name="May B.J."/>
            <person name="Zhang Q."/>
            <person name="Li L.L."/>
            <person name="Paustian M.L."/>
            <person name="Whittam T.S."/>
            <person name="Kapur V."/>
        </authorList>
    </citation>
    <scope>NUCLEOTIDE SEQUENCE [LARGE SCALE GENOMIC DNA]</scope>
    <source>
        <strain>Pm70</strain>
    </source>
</reference>
<gene>
    <name type="primary">secG</name>
    <name type="ordered locus">PM0208</name>
</gene>
<keyword id="KW-0997">Cell inner membrane</keyword>
<keyword id="KW-1003">Cell membrane</keyword>
<keyword id="KW-0472">Membrane</keyword>
<keyword id="KW-0653">Protein transport</keyword>
<keyword id="KW-1185">Reference proteome</keyword>
<keyword id="KW-0811">Translocation</keyword>
<keyword id="KW-0812">Transmembrane</keyword>
<keyword id="KW-1133">Transmembrane helix</keyword>
<keyword id="KW-0813">Transport</keyword>
<comment type="function">
    <text evidence="1">Involved in protein export. Participates in an early event of protein translocation (By similarity).</text>
</comment>
<comment type="subcellular location">
    <subcellularLocation>
        <location evidence="1">Cell inner membrane</location>
        <topology evidence="1">Multi-pass membrane protein</topology>
    </subcellularLocation>
</comment>
<comment type="similarity">
    <text evidence="3">Belongs to the SecG family.</text>
</comment>